<comment type="function">
    <text evidence="1">The RuvA-RuvB-RuvC complex processes Holliday junction (HJ) DNA during genetic recombination and DNA repair. Endonuclease that resolves HJ intermediates. Cleaves cruciform DNA by making single-stranded nicks across the HJ at symmetrical positions within the homologous arms, yielding a 5'-phosphate and a 3'-hydroxyl group; requires a central core of homology in the junction. The consensus cleavage sequence is 5'-(A/T)TT(C/G)-3'. Cleavage occurs on the 3'-side of the TT dinucleotide at the point of strand exchange. HJ branch migration catalyzed by RuvA-RuvB allows RuvC to scan DNA until it finds its consensus sequence, where it cleaves and resolves the cruciform DNA.</text>
</comment>
<comment type="catalytic activity">
    <reaction evidence="1">
        <text>Endonucleolytic cleavage at a junction such as a reciprocal single-stranded crossover between two homologous DNA duplexes (Holliday junction).</text>
        <dbReference type="EC" id="3.1.21.10"/>
    </reaction>
</comment>
<comment type="cofactor">
    <cofactor evidence="1">
        <name>Mg(2+)</name>
        <dbReference type="ChEBI" id="CHEBI:18420"/>
    </cofactor>
    <text evidence="1">Binds 2 Mg(2+) ion per subunit.</text>
</comment>
<comment type="subunit">
    <text evidence="1">Homodimer which binds Holliday junction (HJ) DNA. The HJ becomes 2-fold symmetrical on binding to RuvC with unstacked arms; it has a different conformation from HJ DNA in complex with RuvA. In the full resolvosome a probable DNA-RuvA(4)-RuvB(12)-RuvC(2) complex forms which resolves the HJ.</text>
</comment>
<comment type="subcellular location">
    <subcellularLocation>
        <location evidence="1">Cytoplasm</location>
    </subcellularLocation>
</comment>
<comment type="similarity">
    <text evidence="1">Belongs to the RuvC family.</text>
</comment>
<proteinExistence type="inferred from homology"/>
<protein>
    <recommendedName>
        <fullName evidence="1">Crossover junction endodeoxyribonuclease RuvC</fullName>
        <ecNumber evidence="1">3.1.21.10</ecNumber>
    </recommendedName>
    <alternativeName>
        <fullName evidence="1">Holliday junction nuclease RuvC</fullName>
    </alternativeName>
    <alternativeName>
        <fullName evidence="1">Holliday junction resolvase RuvC</fullName>
    </alternativeName>
</protein>
<sequence length="165" mass="17325">MPRILGIDPGSRITGYGVVEGSGSAPRHVASGCVRLPTGPFPDRLRVLYRALSELLAQHRPEAAVVEQVFVSRNPDSALKLGQARGAAICACVNAGLPVAEYTPGEIKQALVGHGRAGKAQVGYMVRMLLRLDATPAEDAGDALAAALCHLHQADMQARLRRAGA</sequence>
<dbReference type="EC" id="3.1.21.10" evidence="1"/>
<dbReference type="EMBL" id="CP000453">
    <property type="protein sequence ID" value="ABI57833.1"/>
    <property type="molecule type" value="Genomic_DNA"/>
</dbReference>
<dbReference type="RefSeq" id="WP_011630226.1">
    <property type="nucleotide sequence ID" value="NC_008340.1"/>
</dbReference>
<dbReference type="SMR" id="Q0A5Q4"/>
<dbReference type="KEGG" id="aeh:Mlg_2493"/>
<dbReference type="eggNOG" id="COG0817">
    <property type="taxonomic scope" value="Bacteria"/>
</dbReference>
<dbReference type="HOGENOM" id="CLU_091257_3_1_6"/>
<dbReference type="OrthoDB" id="9805499at2"/>
<dbReference type="Proteomes" id="UP000001962">
    <property type="component" value="Chromosome"/>
</dbReference>
<dbReference type="GO" id="GO:0005737">
    <property type="term" value="C:cytoplasm"/>
    <property type="evidence" value="ECO:0007669"/>
    <property type="project" value="UniProtKB-SubCell"/>
</dbReference>
<dbReference type="GO" id="GO:0048476">
    <property type="term" value="C:Holliday junction resolvase complex"/>
    <property type="evidence" value="ECO:0007669"/>
    <property type="project" value="UniProtKB-UniRule"/>
</dbReference>
<dbReference type="GO" id="GO:0008821">
    <property type="term" value="F:crossover junction DNA endonuclease activity"/>
    <property type="evidence" value="ECO:0007669"/>
    <property type="project" value="UniProtKB-UniRule"/>
</dbReference>
<dbReference type="GO" id="GO:0003677">
    <property type="term" value="F:DNA binding"/>
    <property type="evidence" value="ECO:0007669"/>
    <property type="project" value="UniProtKB-KW"/>
</dbReference>
<dbReference type="GO" id="GO:0000287">
    <property type="term" value="F:magnesium ion binding"/>
    <property type="evidence" value="ECO:0007669"/>
    <property type="project" value="UniProtKB-UniRule"/>
</dbReference>
<dbReference type="GO" id="GO:0006310">
    <property type="term" value="P:DNA recombination"/>
    <property type="evidence" value="ECO:0007669"/>
    <property type="project" value="UniProtKB-UniRule"/>
</dbReference>
<dbReference type="GO" id="GO:0006281">
    <property type="term" value="P:DNA repair"/>
    <property type="evidence" value="ECO:0007669"/>
    <property type="project" value="UniProtKB-UniRule"/>
</dbReference>
<dbReference type="CDD" id="cd16962">
    <property type="entry name" value="RuvC"/>
    <property type="match status" value="1"/>
</dbReference>
<dbReference type="FunFam" id="3.30.420.10:FF:000002">
    <property type="entry name" value="Crossover junction endodeoxyribonuclease RuvC"/>
    <property type="match status" value="1"/>
</dbReference>
<dbReference type="Gene3D" id="3.30.420.10">
    <property type="entry name" value="Ribonuclease H-like superfamily/Ribonuclease H"/>
    <property type="match status" value="1"/>
</dbReference>
<dbReference type="HAMAP" id="MF_00034">
    <property type="entry name" value="RuvC"/>
    <property type="match status" value="1"/>
</dbReference>
<dbReference type="InterPro" id="IPR012337">
    <property type="entry name" value="RNaseH-like_sf"/>
</dbReference>
<dbReference type="InterPro" id="IPR036397">
    <property type="entry name" value="RNaseH_sf"/>
</dbReference>
<dbReference type="InterPro" id="IPR002176">
    <property type="entry name" value="X-over_junc_endoDNase_RuvC"/>
</dbReference>
<dbReference type="NCBIfam" id="TIGR00228">
    <property type="entry name" value="ruvC"/>
    <property type="match status" value="1"/>
</dbReference>
<dbReference type="PANTHER" id="PTHR30194">
    <property type="entry name" value="CROSSOVER JUNCTION ENDODEOXYRIBONUCLEASE RUVC"/>
    <property type="match status" value="1"/>
</dbReference>
<dbReference type="PANTHER" id="PTHR30194:SF3">
    <property type="entry name" value="CROSSOVER JUNCTION ENDODEOXYRIBONUCLEASE RUVC"/>
    <property type="match status" value="1"/>
</dbReference>
<dbReference type="Pfam" id="PF02075">
    <property type="entry name" value="RuvC"/>
    <property type="match status" value="1"/>
</dbReference>
<dbReference type="PRINTS" id="PR00696">
    <property type="entry name" value="RSOLVASERUVC"/>
</dbReference>
<dbReference type="SUPFAM" id="SSF53098">
    <property type="entry name" value="Ribonuclease H-like"/>
    <property type="match status" value="1"/>
</dbReference>
<gene>
    <name evidence="1" type="primary">ruvC</name>
    <name type="ordered locus">Mlg_2493</name>
</gene>
<evidence type="ECO:0000255" key="1">
    <source>
        <dbReference type="HAMAP-Rule" id="MF_00034"/>
    </source>
</evidence>
<feature type="chain" id="PRO_1000002713" description="Crossover junction endodeoxyribonuclease RuvC">
    <location>
        <begin position="1"/>
        <end position="165"/>
    </location>
</feature>
<feature type="active site" evidence="1">
    <location>
        <position position="8"/>
    </location>
</feature>
<feature type="active site" evidence="1">
    <location>
        <position position="67"/>
    </location>
</feature>
<feature type="active site" evidence="1">
    <location>
        <position position="139"/>
    </location>
</feature>
<feature type="binding site" evidence="1">
    <location>
        <position position="8"/>
    </location>
    <ligand>
        <name>Mg(2+)</name>
        <dbReference type="ChEBI" id="CHEBI:18420"/>
        <label>1</label>
    </ligand>
</feature>
<feature type="binding site" evidence="1">
    <location>
        <position position="67"/>
    </location>
    <ligand>
        <name>Mg(2+)</name>
        <dbReference type="ChEBI" id="CHEBI:18420"/>
        <label>2</label>
    </ligand>
</feature>
<feature type="binding site" evidence="1">
    <location>
        <position position="139"/>
    </location>
    <ligand>
        <name>Mg(2+)</name>
        <dbReference type="ChEBI" id="CHEBI:18420"/>
        <label>1</label>
    </ligand>
</feature>
<accession>Q0A5Q4</accession>
<organism>
    <name type="scientific">Alkalilimnicola ehrlichii (strain ATCC BAA-1101 / DSM 17681 / MLHE-1)</name>
    <dbReference type="NCBI Taxonomy" id="187272"/>
    <lineage>
        <taxon>Bacteria</taxon>
        <taxon>Pseudomonadati</taxon>
        <taxon>Pseudomonadota</taxon>
        <taxon>Gammaproteobacteria</taxon>
        <taxon>Chromatiales</taxon>
        <taxon>Ectothiorhodospiraceae</taxon>
        <taxon>Alkalilimnicola</taxon>
    </lineage>
</organism>
<reference key="1">
    <citation type="submission" date="2006-08" db="EMBL/GenBank/DDBJ databases">
        <title>Complete sequence of Alkalilimnicola ehrilichei MLHE-1.</title>
        <authorList>
            <person name="Copeland A."/>
            <person name="Lucas S."/>
            <person name="Lapidus A."/>
            <person name="Barry K."/>
            <person name="Detter J.C."/>
            <person name="Glavina del Rio T."/>
            <person name="Hammon N."/>
            <person name="Israni S."/>
            <person name="Dalin E."/>
            <person name="Tice H."/>
            <person name="Pitluck S."/>
            <person name="Sims D."/>
            <person name="Brettin T."/>
            <person name="Bruce D."/>
            <person name="Han C."/>
            <person name="Tapia R."/>
            <person name="Gilna P."/>
            <person name="Schmutz J."/>
            <person name="Larimer F."/>
            <person name="Land M."/>
            <person name="Hauser L."/>
            <person name="Kyrpides N."/>
            <person name="Mikhailova N."/>
            <person name="Oremland R.S."/>
            <person name="Hoeft S.E."/>
            <person name="Switzer-Blum J."/>
            <person name="Kulp T."/>
            <person name="King G."/>
            <person name="Tabita R."/>
            <person name="Witte B."/>
            <person name="Santini J.M."/>
            <person name="Basu P."/>
            <person name="Hollibaugh J.T."/>
            <person name="Xie G."/>
            <person name="Stolz J.F."/>
            <person name="Richardson P."/>
        </authorList>
    </citation>
    <scope>NUCLEOTIDE SEQUENCE [LARGE SCALE GENOMIC DNA]</scope>
    <source>
        <strain>ATCC BAA-1101 / DSM 17681 / MLHE-1</strain>
    </source>
</reference>
<name>RUVC_ALKEH</name>
<keyword id="KW-0963">Cytoplasm</keyword>
<keyword id="KW-0227">DNA damage</keyword>
<keyword id="KW-0233">DNA recombination</keyword>
<keyword id="KW-0234">DNA repair</keyword>
<keyword id="KW-0238">DNA-binding</keyword>
<keyword id="KW-0255">Endonuclease</keyword>
<keyword id="KW-0378">Hydrolase</keyword>
<keyword id="KW-0460">Magnesium</keyword>
<keyword id="KW-0479">Metal-binding</keyword>
<keyword id="KW-0540">Nuclease</keyword>
<keyword id="KW-1185">Reference proteome</keyword>